<accession>Q56P11</accession>
<accession>Q1KXP1</accession>
<accession>Q332Y9</accession>
<gene>
    <name evidence="1" type="primary">rpoC2</name>
    <name type="ORF">PSC014</name>
</gene>
<comment type="function">
    <text evidence="1">DNA-dependent RNA polymerase catalyzes the transcription of DNA into RNA using the four ribonucleoside triphosphates as substrates.</text>
</comment>
<comment type="catalytic activity">
    <reaction evidence="1">
        <text>RNA(n) + a ribonucleoside 5'-triphosphate = RNA(n+1) + diphosphate</text>
        <dbReference type="Rhea" id="RHEA:21248"/>
        <dbReference type="Rhea" id="RHEA-COMP:14527"/>
        <dbReference type="Rhea" id="RHEA-COMP:17342"/>
        <dbReference type="ChEBI" id="CHEBI:33019"/>
        <dbReference type="ChEBI" id="CHEBI:61557"/>
        <dbReference type="ChEBI" id="CHEBI:140395"/>
        <dbReference type="EC" id="2.7.7.6"/>
    </reaction>
</comment>
<comment type="cofactor">
    <cofactor evidence="1">
        <name>Zn(2+)</name>
        <dbReference type="ChEBI" id="CHEBI:29105"/>
    </cofactor>
    <text evidence="1">Binds 1 Zn(2+) ion per subunit.</text>
</comment>
<comment type="subunit">
    <text evidence="1">In plastids the minimal PEP RNA polymerase catalytic core is composed of four subunits: alpha, beta, beta', and beta''. When a (nuclear-encoded) sigma factor is associated with the core the holoenzyme is formed, which can initiate transcription.</text>
</comment>
<comment type="subcellular location">
    <subcellularLocation>
        <location evidence="1">Plastid</location>
        <location evidence="1">Chloroplast</location>
    </subcellularLocation>
</comment>
<comment type="similarity">
    <text evidence="1">Belongs to the RNA polymerase beta' chain family. RpoC2 subfamily.</text>
</comment>
<evidence type="ECO:0000255" key="1">
    <source>
        <dbReference type="HAMAP-Rule" id="MF_01324"/>
    </source>
</evidence>
<evidence type="ECO:0000305" key="2"/>
<organism>
    <name type="scientific">Lactuca sativa</name>
    <name type="common">Garden lettuce</name>
    <dbReference type="NCBI Taxonomy" id="4236"/>
    <lineage>
        <taxon>Eukaryota</taxon>
        <taxon>Viridiplantae</taxon>
        <taxon>Streptophyta</taxon>
        <taxon>Embryophyta</taxon>
        <taxon>Tracheophyta</taxon>
        <taxon>Spermatophyta</taxon>
        <taxon>Magnoliopsida</taxon>
        <taxon>eudicotyledons</taxon>
        <taxon>Gunneridae</taxon>
        <taxon>Pentapetalae</taxon>
        <taxon>asterids</taxon>
        <taxon>campanulids</taxon>
        <taxon>Asterales</taxon>
        <taxon>Asteraceae</taxon>
        <taxon>Cichorioideae</taxon>
        <taxon>Cichorieae</taxon>
        <taxon>Lactucinae</taxon>
        <taxon>Lactuca</taxon>
    </lineage>
</organism>
<reference key="1">
    <citation type="journal article" date="2005" name="Mol. Biol. Evol.">
        <title>Two chloroplast DNA inversions originated simultaneously during the early evolution of the sunflower family (Asteraceae).</title>
        <authorList>
            <person name="Kim K.-J."/>
            <person name="Choi K.-S."/>
            <person name="Jansen R.K."/>
        </authorList>
    </citation>
    <scope>NUCLEOTIDE SEQUENCE [GENOMIC DNA]</scope>
</reference>
<reference key="2">
    <citation type="journal article" date="2006" name="Transgenic Res.">
        <title>Efficient and stable transformation of Lactuca sativa L. cv. Cisco (lettuce) plastids.</title>
        <authorList>
            <person name="Kanamoto H."/>
            <person name="Yamashita A."/>
            <person name="Asao H."/>
            <person name="Okumura S."/>
            <person name="Takase H."/>
            <person name="Hattori M."/>
            <person name="Yokota A."/>
            <person name="Tomizawa K."/>
        </authorList>
    </citation>
    <scope>NUCLEOTIDE SEQUENCE [LARGE SCALE GENOMIC DNA]</scope>
    <source>
        <strain>cv. Cisco</strain>
    </source>
</reference>
<reference key="3">
    <citation type="submission" date="2006-01" db="EMBL/GenBank/DDBJ databases">
        <title>A comparison of the first two published chloroplast genomes in Asteraceae: Lactuca and Helianthus.</title>
        <authorList>
            <person name="Timme R.E."/>
            <person name="Kuehl J.V."/>
            <person name="Boore J.L."/>
            <person name="Jansen R.K."/>
        </authorList>
    </citation>
    <scope>NUCLEOTIDE SEQUENCE [LARGE SCALE GENOMIC DNA]</scope>
    <source>
        <strain>cv. Salinas</strain>
    </source>
</reference>
<proteinExistence type="inferred from homology"/>
<sequence>MEVLMAERPTQVFHNKVIDGTAMKRLISRFIDHYGIGYTSHILDQVKTLGFRQATAASISLGIDDLLTIPSKRWLVQDAEQQSFILEKHHHYGNVHAVEKLRQSIEIWYATSEYLRQEMNPNFRMTDPFNPVHIMSFSGARGNASQVHQLVGMRGLMSDPQGQMIDLPIQSNLREGLSLTEYIISCYGARKGVVDTAIRTSDAGYLTRRLVEVVQHIVVRRTDCGTVRGISVSPRNGMMTDRIFIQTLIGRVLADDIYIGSRCIATRNQDIGVGLVSRFITFRAQPISIRTPFTCRSTSWICQLCYGRSPAHDDLVELGEAVGIIAGQSIGEPGTQLTLRTFHTGGVFTGGTAEHVRAPSNGKIKFNEDLVHPTRTRHGHPAFLCSRDLYVTIESEDIIHNVCIPPKSFLLVQNDQYVESEQVIAEIRARTSTLNLKEKVRKHIYSDSEGEMHWNTDVYHAPEFTYGNIHLLPKTSHLWILLGEPWRYSLGPCSIHKDQDQMNAYSLSVKPRYIANPSVTNNQVRHKFFSSYFSGKNQKGDRIPDCSELNRMTCTDHSNLRYPAILDGNSDLLAKRRRNRFIIPLESIQEGENQLIPSSGISMEIPRNGILRRNSILAYFDDPRYIRKSSGLTKYETRELNSIVNEENLIEYRGVKVFWPKYQKEVNPFFFIPVEVHILSESSSIMVRHNSIIGADTQITFNRRSRVGGLVRVKKKAEKMKLIIFSGDIHFPGKTNKAFRLIPPGGGKPNSKEYKKLKNWLYIQRMKLSRYEKKYFVLVQPVVPYKKTDGINLGRLFPPDLLQESDNLQLRVVNYILYYDPILEIWDTSIQLVRTSLVLNWDQDKKIEKACASFVEIRTNGLLRYFLRIDLAKSPISYTGKRNDLSGSGLISENGSDRANVNPFSSIYSYSKSRIKESLNPNQGTIHTLLNRNKESQSLIILSSSNCFRIGPFNDVKSPNVIKESIKKNPLIPIRNSLGPLGTGFPIYNFDLFSHLITHNQILVTNYLQLDNFKQIFQILKYYLLDENGQIYNPYSCSNIILNPFHLNWYFLHYNYCEETSPIVSLGQFLCENVCIAKKGPHLKSGQVLIVQVDSVVIRSAKPYLATPGATVHGHYGEILYEGDTLVTFIYEKSRSGDITQGLPKVEQVLEVRSIDSISMNLEKRIEGWNKSITRILGIPWAFLIGAELTIVQSRISLVNKVQKVYRSQGVQIHNRHIEIIVRQITSKVLVSEDEMSNVFSPGELIGLLRAERMGRALEEAICYQAVLLGITRASMNTQSFISEASFQETARVLAKAALLGRIDWLKGLKENVVLGGMIPVGSGFKTPSSEPNNIPNNIAFELQKKNLLEGEMKDILFYHRKLFDSCLSNNFHDTQEQSFF</sequence>
<protein>
    <recommendedName>
        <fullName evidence="1">DNA-directed RNA polymerase subunit beta''</fullName>
        <ecNumber evidence="1">2.7.7.6</ecNumber>
    </recommendedName>
    <alternativeName>
        <fullName evidence="1">PEP</fullName>
    </alternativeName>
    <alternativeName>
        <fullName evidence="1">Plastid-encoded RNA polymerase subunit beta''</fullName>
        <shortName evidence="1">RNA polymerase subunit beta''</shortName>
    </alternativeName>
</protein>
<keyword id="KW-0150">Chloroplast</keyword>
<keyword id="KW-0240">DNA-directed RNA polymerase</keyword>
<keyword id="KW-0479">Metal-binding</keyword>
<keyword id="KW-0548">Nucleotidyltransferase</keyword>
<keyword id="KW-0934">Plastid</keyword>
<keyword id="KW-0804">Transcription</keyword>
<keyword id="KW-0808">Transferase</keyword>
<keyword id="KW-0862">Zinc</keyword>
<geneLocation type="chloroplast"/>
<feature type="chain" id="PRO_0000067927" description="DNA-directed RNA polymerase subunit beta''">
    <location>
        <begin position="1"/>
        <end position="1381"/>
    </location>
</feature>
<feature type="binding site" evidence="1">
    <location>
        <position position="224"/>
    </location>
    <ligand>
        <name>Zn(2+)</name>
        <dbReference type="ChEBI" id="CHEBI:29105"/>
    </ligand>
</feature>
<feature type="binding site" evidence="1">
    <location>
        <position position="295"/>
    </location>
    <ligand>
        <name>Zn(2+)</name>
        <dbReference type="ChEBI" id="CHEBI:29105"/>
    </ligand>
</feature>
<feature type="binding site" evidence="1">
    <location>
        <position position="302"/>
    </location>
    <ligand>
        <name>Zn(2+)</name>
        <dbReference type="ChEBI" id="CHEBI:29105"/>
    </ligand>
</feature>
<feature type="binding site" evidence="1">
    <location>
        <position position="305"/>
    </location>
    <ligand>
        <name>Zn(2+)</name>
        <dbReference type="ChEBI" id="CHEBI:29105"/>
    </ligand>
</feature>
<feature type="sequence conflict" description="In Ref. 1; AAX58144." evidence="2" ref="1">
    <original>SNNFHDTQEQSFF</original>
    <variation>QIISMIHKNNHFL</variation>
    <location>
        <begin position="1369"/>
        <end position="1381"/>
    </location>
</feature>
<name>RPOC2_LACSA</name>
<dbReference type="EC" id="2.7.7.6" evidence="1"/>
<dbReference type="EMBL" id="AY865171">
    <property type="protein sequence ID" value="AAX58144.1"/>
    <property type="molecule type" value="Genomic_DNA"/>
</dbReference>
<dbReference type="EMBL" id="AP007232">
    <property type="protein sequence ID" value="BAE47583.1"/>
    <property type="molecule type" value="Genomic_DNA"/>
</dbReference>
<dbReference type="EMBL" id="DQ383816">
    <property type="protein sequence ID" value="ABD47222.1"/>
    <property type="molecule type" value="Genomic_DNA"/>
</dbReference>
<dbReference type="RefSeq" id="YP_398318.1">
    <property type="nucleotide sequence ID" value="NC_007578.1"/>
</dbReference>
<dbReference type="SMR" id="Q56P11"/>
<dbReference type="GeneID" id="3772824"/>
<dbReference type="KEGG" id="lsv:3772824"/>
<dbReference type="OrthoDB" id="498011at2759"/>
<dbReference type="GO" id="GO:0009507">
    <property type="term" value="C:chloroplast"/>
    <property type="evidence" value="ECO:0007669"/>
    <property type="project" value="UniProtKB-SubCell"/>
</dbReference>
<dbReference type="GO" id="GO:0000428">
    <property type="term" value="C:DNA-directed RNA polymerase complex"/>
    <property type="evidence" value="ECO:0007669"/>
    <property type="project" value="UniProtKB-KW"/>
</dbReference>
<dbReference type="GO" id="GO:0005739">
    <property type="term" value="C:mitochondrion"/>
    <property type="evidence" value="ECO:0007669"/>
    <property type="project" value="GOC"/>
</dbReference>
<dbReference type="GO" id="GO:0003677">
    <property type="term" value="F:DNA binding"/>
    <property type="evidence" value="ECO:0007669"/>
    <property type="project" value="UniProtKB-UniRule"/>
</dbReference>
<dbReference type="GO" id="GO:0003899">
    <property type="term" value="F:DNA-directed RNA polymerase activity"/>
    <property type="evidence" value="ECO:0007669"/>
    <property type="project" value="UniProtKB-UniRule"/>
</dbReference>
<dbReference type="GO" id="GO:0008270">
    <property type="term" value="F:zinc ion binding"/>
    <property type="evidence" value="ECO:0007669"/>
    <property type="project" value="UniProtKB-UniRule"/>
</dbReference>
<dbReference type="GO" id="GO:0006351">
    <property type="term" value="P:DNA-templated transcription"/>
    <property type="evidence" value="ECO:0007669"/>
    <property type="project" value="UniProtKB-UniRule"/>
</dbReference>
<dbReference type="CDD" id="cd02655">
    <property type="entry name" value="RNAP_beta'_C"/>
    <property type="match status" value="1"/>
</dbReference>
<dbReference type="FunFam" id="1.10.132.30:FF:000002">
    <property type="entry name" value="DNA-directed RNA polymerase subunit beta"/>
    <property type="match status" value="1"/>
</dbReference>
<dbReference type="Gene3D" id="1.10.132.30">
    <property type="match status" value="1"/>
</dbReference>
<dbReference type="Gene3D" id="1.10.150.390">
    <property type="match status" value="1"/>
</dbReference>
<dbReference type="Gene3D" id="1.10.1790.20">
    <property type="match status" value="1"/>
</dbReference>
<dbReference type="Gene3D" id="1.10.274.100">
    <property type="entry name" value="RNA polymerase Rpb1, domain 3"/>
    <property type="match status" value="1"/>
</dbReference>
<dbReference type="HAMAP" id="MF_01324">
    <property type="entry name" value="RNApol_bact_RpoC2"/>
    <property type="match status" value="1"/>
</dbReference>
<dbReference type="InterPro" id="IPR012756">
    <property type="entry name" value="DNA-dir_RpoC2_beta_pp"/>
</dbReference>
<dbReference type="InterPro" id="IPR050254">
    <property type="entry name" value="RNA_pol_beta''_euk"/>
</dbReference>
<dbReference type="InterPro" id="IPR042102">
    <property type="entry name" value="RNA_pol_Rpb1_3_sf"/>
</dbReference>
<dbReference type="InterPro" id="IPR007083">
    <property type="entry name" value="RNA_pol_Rpb1_4"/>
</dbReference>
<dbReference type="InterPro" id="IPR007081">
    <property type="entry name" value="RNA_pol_Rpb1_5"/>
</dbReference>
<dbReference type="InterPro" id="IPR038120">
    <property type="entry name" value="Rpb1_funnel_sf"/>
</dbReference>
<dbReference type="NCBIfam" id="TIGR02388">
    <property type="entry name" value="rpoC2_cyan"/>
    <property type="match status" value="1"/>
</dbReference>
<dbReference type="PANTHER" id="PTHR34995">
    <property type="entry name" value="DNA-DIRECTED RNA POLYMERASE SUBUNIT BETA"/>
    <property type="match status" value="1"/>
</dbReference>
<dbReference type="PANTHER" id="PTHR34995:SF1">
    <property type="entry name" value="DNA-DIRECTED RNA POLYMERASE SUBUNIT BETA"/>
    <property type="match status" value="1"/>
</dbReference>
<dbReference type="Pfam" id="PF05000">
    <property type="entry name" value="RNA_pol_Rpb1_4"/>
    <property type="match status" value="1"/>
</dbReference>
<dbReference type="Pfam" id="PF04998">
    <property type="entry name" value="RNA_pol_Rpb1_5"/>
    <property type="match status" value="2"/>
</dbReference>
<dbReference type="SUPFAM" id="SSF64484">
    <property type="entry name" value="beta and beta-prime subunits of DNA dependent RNA-polymerase"/>
    <property type="match status" value="1"/>
</dbReference>